<feature type="chain" id="PRO_1000194277" description="Small ribosomal subunit protein bS21">
    <location>
        <begin position="1"/>
        <end position="57"/>
    </location>
</feature>
<reference key="1">
    <citation type="submission" date="2009-04" db="EMBL/GenBank/DDBJ databases">
        <title>Genome sequence of Bacillus anthracis A0248.</title>
        <authorList>
            <person name="Dodson R.J."/>
            <person name="Munk A.C."/>
            <person name="Bruce D."/>
            <person name="Detter C."/>
            <person name="Tapia R."/>
            <person name="Sutton G."/>
            <person name="Sims D."/>
            <person name="Brettin T."/>
        </authorList>
    </citation>
    <scope>NUCLEOTIDE SEQUENCE [LARGE SCALE GENOMIC DNA]</scope>
    <source>
        <strain>A0248</strain>
    </source>
</reference>
<accession>C3P8L5</accession>
<keyword id="KW-0687">Ribonucleoprotein</keyword>
<keyword id="KW-0689">Ribosomal protein</keyword>
<evidence type="ECO:0000255" key="1">
    <source>
        <dbReference type="HAMAP-Rule" id="MF_00358"/>
    </source>
</evidence>
<evidence type="ECO:0000305" key="2"/>
<comment type="similarity">
    <text evidence="1">Belongs to the bacterial ribosomal protein bS21 family.</text>
</comment>
<sequence length="57" mass="6773">MSKTVVRKNESLEDALRRFKRSVSKTGTLAEARKREFYEKPSVKRKKKSEAARKRKF</sequence>
<gene>
    <name evidence="1" type="primary">rpsU</name>
    <name type="ordered locus">BAA_4553</name>
</gene>
<dbReference type="EMBL" id="CP001598">
    <property type="protein sequence ID" value="ACQ47990.1"/>
    <property type="molecule type" value="Genomic_DNA"/>
</dbReference>
<dbReference type="RefSeq" id="WP_000048061.1">
    <property type="nucleotide sequence ID" value="NC_012659.1"/>
</dbReference>
<dbReference type="SMR" id="C3P8L5"/>
<dbReference type="GeneID" id="93006791"/>
<dbReference type="KEGG" id="bai:BAA_4553"/>
<dbReference type="HOGENOM" id="CLU_159258_3_2_9"/>
<dbReference type="GO" id="GO:1990904">
    <property type="term" value="C:ribonucleoprotein complex"/>
    <property type="evidence" value="ECO:0007669"/>
    <property type="project" value="UniProtKB-KW"/>
</dbReference>
<dbReference type="GO" id="GO:0005840">
    <property type="term" value="C:ribosome"/>
    <property type="evidence" value="ECO:0007669"/>
    <property type="project" value="UniProtKB-KW"/>
</dbReference>
<dbReference type="GO" id="GO:0003735">
    <property type="term" value="F:structural constituent of ribosome"/>
    <property type="evidence" value="ECO:0007669"/>
    <property type="project" value="InterPro"/>
</dbReference>
<dbReference type="GO" id="GO:0006412">
    <property type="term" value="P:translation"/>
    <property type="evidence" value="ECO:0007669"/>
    <property type="project" value="UniProtKB-UniRule"/>
</dbReference>
<dbReference type="Gene3D" id="1.20.5.1150">
    <property type="entry name" value="Ribosomal protein S8"/>
    <property type="match status" value="1"/>
</dbReference>
<dbReference type="HAMAP" id="MF_00358">
    <property type="entry name" value="Ribosomal_bS21"/>
    <property type="match status" value="1"/>
</dbReference>
<dbReference type="InterPro" id="IPR001911">
    <property type="entry name" value="Ribosomal_bS21"/>
</dbReference>
<dbReference type="InterPro" id="IPR018278">
    <property type="entry name" value="Ribosomal_bS21_CS"/>
</dbReference>
<dbReference type="InterPro" id="IPR038380">
    <property type="entry name" value="Ribosomal_bS21_sf"/>
</dbReference>
<dbReference type="NCBIfam" id="TIGR00030">
    <property type="entry name" value="S21p"/>
    <property type="match status" value="1"/>
</dbReference>
<dbReference type="PANTHER" id="PTHR21109">
    <property type="entry name" value="MITOCHONDRIAL 28S RIBOSOMAL PROTEIN S21"/>
    <property type="match status" value="1"/>
</dbReference>
<dbReference type="PANTHER" id="PTHR21109:SF22">
    <property type="entry name" value="SMALL RIBOSOMAL SUBUNIT PROTEIN BS21"/>
    <property type="match status" value="1"/>
</dbReference>
<dbReference type="Pfam" id="PF01165">
    <property type="entry name" value="Ribosomal_S21"/>
    <property type="match status" value="1"/>
</dbReference>
<dbReference type="PRINTS" id="PR00976">
    <property type="entry name" value="RIBOSOMALS21"/>
</dbReference>
<dbReference type="PROSITE" id="PS01181">
    <property type="entry name" value="RIBOSOMAL_S21"/>
    <property type="match status" value="1"/>
</dbReference>
<organism>
    <name type="scientific">Bacillus anthracis (strain A0248)</name>
    <dbReference type="NCBI Taxonomy" id="592021"/>
    <lineage>
        <taxon>Bacteria</taxon>
        <taxon>Bacillati</taxon>
        <taxon>Bacillota</taxon>
        <taxon>Bacilli</taxon>
        <taxon>Bacillales</taxon>
        <taxon>Bacillaceae</taxon>
        <taxon>Bacillus</taxon>
        <taxon>Bacillus cereus group</taxon>
    </lineage>
</organism>
<proteinExistence type="inferred from homology"/>
<name>RS21_BACAA</name>
<protein>
    <recommendedName>
        <fullName evidence="1">Small ribosomal subunit protein bS21</fullName>
    </recommendedName>
    <alternativeName>
        <fullName evidence="2">30S ribosomal protein S21</fullName>
    </alternativeName>
</protein>